<dbReference type="EMBL" id="U00089">
    <property type="protein sequence ID" value="AAG34737.1"/>
    <property type="molecule type" value="Genomic_DNA"/>
</dbReference>
<dbReference type="PIR" id="S73404">
    <property type="entry name" value="S73404"/>
</dbReference>
<dbReference type="RefSeq" id="NP_109765.1">
    <property type="nucleotide sequence ID" value="NC_000912.1"/>
</dbReference>
<dbReference type="RefSeq" id="WP_010874434.1">
    <property type="nucleotide sequence ID" value="NZ_OU342337.1"/>
</dbReference>
<dbReference type="STRING" id="272634.MPN_077"/>
<dbReference type="EnsemblBacteria" id="AAG34737">
    <property type="protein sequence ID" value="AAG34737"/>
    <property type="gene ID" value="MPN_077"/>
</dbReference>
<dbReference type="KEGG" id="mpn:MPN_077"/>
<dbReference type="PATRIC" id="fig|272634.6.peg.78"/>
<dbReference type="HOGENOM" id="CLU_033053_0_0_14"/>
<dbReference type="OrthoDB" id="399989at2"/>
<dbReference type="BioCyc" id="MPNE272634:G1GJ3-118-MONOMER"/>
<dbReference type="Proteomes" id="UP000000808">
    <property type="component" value="Chromosome"/>
</dbReference>
<dbReference type="GO" id="GO:0005886">
    <property type="term" value="C:plasma membrane"/>
    <property type="evidence" value="ECO:0007669"/>
    <property type="project" value="UniProtKB-SubCell"/>
</dbReference>
<dbReference type="Gene3D" id="1.20.1250.20">
    <property type="entry name" value="MFS general substrate transporter like domains"/>
    <property type="match status" value="1"/>
</dbReference>
<dbReference type="InterPro" id="IPR011699">
    <property type="entry name" value="MFS_Mycoplasma"/>
</dbReference>
<dbReference type="InterPro" id="IPR036259">
    <property type="entry name" value="MFS_trans_sf"/>
</dbReference>
<dbReference type="Pfam" id="PF07672">
    <property type="entry name" value="MFS_Mycoplasma"/>
    <property type="match status" value="1"/>
</dbReference>
<dbReference type="SUPFAM" id="SSF103473">
    <property type="entry name" value="MFS general substrate transporter"/>
    <property type="match status" value="1"/>
</dbReference>
<sequence>MWGLVLLGYVLFVIEWFVIDFIRGSAASLLTEQTSAVPQYGGWFSSFFVADAGFIPGQATNWTITLLRAVGSILCGVMVVKFGYRHAVMIMMGLMCVCFPFLIIGSPLGGHNELTLLRPASSEVISKLTKISSSLQQGQLLGPVQVGSQTMLADGTPVSLIKGINGNEIGTSASMTGYAFFIIFRSTIAIGGTTLIAYAQPIIASLSSNRKKSILSNANFWGFNVGLVIVAAPFLIPGVGRFATANWVWVVTFMILLVFAMLLVFAWFEKKVDHMLPQKQSKTNQSLSVRPSALSILKRKTTWKLLAIAGVGTILLINPLTQTWFNSLLAISGAKKAIIPTARPILLILWVMGYLLGYFLLSPFNKTIYDKKRWLHFIFTANAVLVLLIVIFAATLGLNTVVGFTFVGIFTFIAGGFGWSLGSSILILPYEYKEYKRNEVSIIFGYVWGFAYVFYSIFDIITSVFLDAPRIATGNTSANILPGAIAAIVLFVSLLLVINWVIIYLPSSWIKNGDECVSEMTKKWRITQWQFLIANKAKNRYADLLK</sequence>
<organism>
    <name type="scientific">Mycoplasma pneumoniae (strain ATCC 29342 / M129 / Subtype 1)</name>
    <name type="common">Mycoplasmoides pneumoniae</name>
    <dbReference type="NCBI Taxonomy" id="272634"/>
    <lineage>
        <taxon>Bacteria</taxon>
        <taxon>Bacillati</taxon>
        <taxon>Mycoplasmatota</taxon>
        <taxon>Mycoplasmoidales</taxon>
        <taxon>Mycoplasmoidaceae</taxon>
        <taxon>Mycoplasmoides</taxon>
    </lineage>
</organism>
<protein>
    <recommendedName>
        <fullName>Major facilitator superfamily transporter MPN_077</fullName>
    </recommendedName>
</protein>
<keyword id="KW-1003">Cell membrane</keyword>
<keyword id="KW-0472">Membrane</keyword>
<keyword id="KW-1185">Reference proteome</keyword>
<keyword id="KW-0812">Transmembrane</keyword>
<keyword id="KW-1133">Transmembrane helix</keyword>
<keyword id="KW-0813">Transport</keyword>
<gene>
    <name type="ordered locus">MPN_077</name>
    <name type="ORF">MP078</name>
    <name type="ORF">R02_orf469</name>
</gene>
<reference key="1">
    <citation type="journal article" date="1996" name="Nucleic Acids Res.">
        <title>Complete sequence analysis of the genome of the bacterium Mycoplasma pneumoniae.</title>
        <authorList>
            <person name="Himmelreich R."/>
            <person name="Hilbert H."/>
            <person name="Plagens H."/>
            <person name="Pirkl E."/>
            <person name="Li B.-C."/>
            <person name="Herrmann R."/>
        </authorList>
    </citation>
    <scope>NUCLEOTIDE SEQUENCE [LARGE SCALE GENOMIC DNA]</scope>
    <source>
        <strain>ATCC 29342 / M129 / Subtype 1</strain>
    </source>
</reference>
<reference key="2">
    <citation type="journal article" date="2000" name="Nucleic Acids Res.">
        <title>Re-annotating the Mycoplasma pneumoniae genome sequence: adding value, function and reading frames.</title>
        <authorList>
            <person name="Dandekar T."/>
            <person name="Huynen M."/>
            <person name="Regula J.T."/>
            <person name="Ueberle B."/>
            <person name="Zimmermann C.U."/>
            <person name="Andrade M.A."/>
            <person name="Doerks T."/>
            <person name="Sanchez-Pulido L."/>
            <person name="Snel B."/>
            <person name="Suyama M."/>
            <person name="Yuan Y.P."/>
            <person name="Herrmann R."/>
            <person name="Bork P."/>
        </authorList>
    </citation>
    <scope>SEQUENCE REVISION</scope>
    <source>
        <strain>ATCC 29342 / M129 / Subtype 1</strain>
    </source>
</reference>
<evidence type="ECO:0000255" key="1"/>
<evidence type="ECO:0000305" key="2"/>
<name>Y077_MYCPN</name>
<comment type="subcellular location">
    <subcellularLocation>
        <location evidence="2">Cell membrane</location>
        <topology evidence="2">Multi-pass membrane protein</topology>
    </subcellularLocation>
</comment>
<comment type="similarity">
    <text evidence="2">Belongs to the major facilitator superfamily.</text>
</comment>
<accession>P75040</accession>
<feature type="chain" id="PRO_0000210406" description="Major facilitator superfamily transporter MPN_077">
    <location>
        <begin position="1"/>
        <end position="546"/>
    </location>
</feature>
<feature type="transmembrane region" description="Helical" evidence="1">
    <location>
        <begin position="2"/>
        <end position="22"/>
    </location>
</feature>
<feature type="transmembrane region" description="Helical" evidence="1">
    <location>
        <begin position="62"/>
        <end position="82"/>
    </location>
</feature>
<feature type="transmembrane region" description="Helical" evidence="1">
    <location>
        <begin position="88"/>
        <end position="108"/>
    </location>
</feature>
<feature type="transmembrane region" description="Helical" evidence="1">
    <location>
        <begin position="179"/>
        <end position="199"/>
    </location>
</feature>
<feature type="transmembrane region" description="Helical" evidence="1">
    <location>
        <begin position="220"/>
        <end position="240"/>
    </location>
</feature>
<feature type="transmembrane region" description="Helical" evidence="1">
    <location>
        <begin position="248"/>
        <end position="268"/>
    </location>
</feature>
<feature type="transmembrane region" description="Helical" evidence="1">
    <location>
        <begin position="305"/>
        <end position="325"/>
    </location>
</feature>
<feature type="transmembrane region" description="Helical" evidence="1">
    <location>
        <begin position="344"/>
        <end position="364"/>
    </location>
</feature>
<feature type="transmembrane region" description="Helical" evidence="1">
    <location>
        <begin position="377"/>
        <end position="397"/>
    </location>
</feature>
<feature type="transmembrane region" description="Helical" evidence="1">
    <location>
        <begin position="401"/>
        <end position="421"/>
    </location>
</feature>
<feature type="transmembrane region" description="Helical" evidence="1">
    <location>
        <begin position="442"/>
        <end position="462"/>
    </location>
</feature>
<feature type="transmembrane region" description="Helical" evidence="1">
    <location>
        <begin position="485"/>
        <end position="505"/>
    </location>
</feature>
<proteinExistence type="inferred from homology"/>